<accession>Q10032</accession>
<name>YQ93_CAEEL</name>
<gene>
    <name type="ORF">C27D6.3</name>
</gene>
<protein>
    <recommendedName>
        <fullName>Uncharacterized protein C27D6.3</fullName>
    </recommendedName>
</protein>
<proteinExistence type="predicted"/>
<organism>
    <name type="scientific">Caenorhabditis elegans</name>
    <dbReference type="NCBI Taxonomy" id="6239"/>
    <lineage>
        <taxon>Eukaryota</taxon>
        <taxon>Metazoa</taxon>
        <taxon>Ecdysozoa</taxon>
        <taxon>Nematoda</taxon>
        <taxon>Chromadorea</taxon>
        <taxon>Rhabditida</taxon>
        <taxon>Rhabditina</taxon>
        <taxon>Rhabditomorpha</taxon>
        <taxon>Rhabditoidea</taxon>
        <taxon>Rhabditidae</taxon>
        <taxon>Peloderinae</taxon>
        <taxon>Caenorhabditis</taxon>
    </lineage>
</organism>
<comment type="subcellular location">
    <subcellularLocation>
        <location evidence="3">Membrane</location>
        <topology evidence="3">Single-pass membrane protein</topology>
    </subcellularLocation>
</comment>
<feature type="chain" id="PRO_0000065193" description="Uncharacterized protein C27D6.3">
    <location>
        <begin position="1"/>
        <end position="118"/>
    </location>
</feature>
<feature type="transmembrane region" description="Helical" evidence="1">
    <location>
        <begin position="81"/>
        <end position="101"/>
    </location>
</feature>
<feature type="region of interest" description="Disordered" evidence="2">
    <location>
        <begin position="1"/>
        <end position="63"/>
    </location>
</feature>
<feature type="compositionally biased region" description="Polar residues" evidence="2">
    <location>
        <begin position="1"/>
        <end position="12"/>
    </location>
</feature>
<feature type="compositionally biased region" description="Basic residues" evidence="2">
    <location>
        <begin position="39"/>
        <end position="63"/>
    </location>
</feature>
<evidence type="ECO:0000255" key="1"/>
<evidence type="ECO:0000256" key="2">
    <source>
        <dbReference type="SAM" id="MobiDB-lite"/>
    </source>
</evidence>
<evidence type="ECO:0000305" key="3"/>
<reference key="1">
    <citation type="journal article" date="1998" name="Science">
        <title>Genome sequence of the nematode C. elegans: a platform for investigating biology.</title>
        <authorList>
            <consortium name="The C. elegans sequencing consortium"/>
        </authorList>
    </citation>
    <scope>NUCLEOTIDE SEQUENCE [LARGE SCALE GENOMIC DNA]</scope>
    <source>
        <strain>Bristol N2</strain>
    </source>
</reference>
<dbReference type="EMBL" id="FO080688">
    <property type="protein sequence ID" value="CCD65810.1"/>
    <property type="molecule type" value="Genomic_DNA"/>
</dbReference>
<dbReference type="PIR" id="T15655">
    <property type="entry name" value="T15655"/>
</dbReference>
<dbReference type="RefSeq" id="NP_494967.1">
    <property type="nucleotide sequence ID" value="NM_062566.4"/>
</dbReference>
<dbReference type="SMR" id="Q10032"/>
<dbReference type="BioGRID" id="39236">
    <property type="interactions" value="1"/>
</dbReference>
<dbReference type="IntAct" id="Q10032">
    <property type="interactions" value="1"/>
</dbReference>
<dbReference type="STRING" id="6239.C27D6.3.1"/>
<dbReference type="PaxDb" id="6239-C27D6.3"/>
<dbReference type="EnsemblMetazoa" id="C27D6.3.1">
    <property type="protein sequence ID" value="C27D6.3.1"/>
    <property type="gene ID" value="WBGene00016161"/>
</dbReference>
<dbReference type="EnsemblMetazoa" id="C27D6.3.2">
    <property type="protein sequence ID" value="C27D6.3.2"/>
    <property type="gene ID" value="WBGene00016161"/>
</dbReference>
<dbReference type="GeneID" id="173886"/>
<dbReference type="KEGG" id="cel:CELE_C27D6.3"/>
<dbReference type="UCSC" id="C27D6.3">
    <property type="organism name" value="c. elegans"/>
</dbReference>
<dbReference type="AGR" id="WB:WBGene00016161"/>
<dbReference type="CTD" id="173886"/>
<dbReference type="WormBase" id="C27D6.3">
    <property type="protein sequence ID" value="CE01813"/>
    <property type="gene ID" value="WBGene00016161"/>
</dbReference>
<dbReference type="eggNOG" id="ENOG502THR0">
    <property type="taxonomic scope" value="Eukaryota"/>
</dbReference>
<dbReference type="GeneTree" id="ENSGT00390000004085"/>
<dbReference type="HOGENOM" id="CLU_157462_0_0_1"/>
<dbReference type="InParanoid" id="Q10032"/>
<dbReference type="OMA" id="KFRAEKT"/>
<dbReference type="OrthoDB" id="5861613at2759"/>
<dbReference type="PhylomeDB" id="Q10032"/>
<dbReference type="PRO" id="PR:Q10032"/>
<dbReference type="Proteomes" id="UP000001940">
    <property type="component" value="Chromosome II"/>
</dbReference>
<dbReference type="Bgee" id="WBGene00016161">
    <property type="expression patterns" value="Expressed in material anatomical entity and 2 other cell types or tissues"/>
</dbReference>
<dbReference type="GO" id="GO:0016020">
    <property type="term" value="C:membrane"/>
    <property type="evidence" value="ECO:0007669"/>
    <property type="project" value="UniProtKB-SubCell"/>
</dbReference>
<dbReference type="InterPro" id="IPR040019">
    <property type="entry name" value="C27D6.3-like"/>
</dbReference>
<dbReference type="PANTHER" id="PTHR39355">
    <property type="entry name" value="PROTEIN CBG20624"/>
    <property type="match status" value="1"/>
</dbReference>
<dbReference type="PANTHER" id="PTHR39355:SF1">
    <property type="entry name" value="PROTEIN CBG20624"/>
    <property type="match status" value="1"/>
</dbReference>
<sequence length="118" mass="13097">MADDNVSFTDQGTAVGDEKKKGGSSAMLDMLGQLEKKETKKKGKKNKKSKKKAKKGKTKKVRKADKYESQNFLFRVEGAMFCAGIIVAMIMLFVIIIYGIITSSQTGGQFNRYMAPLF</sequence>
<keyword id="KW-0472">Membrane</keyword>
<keyword id="KW-1185">Reference proteome</keyword>
<keyword id="KW-0812">Transmembrane</keyword>
<keyword id="KW-1133">Transmembrane helix</keyword>